<dbReference type="EMBL" id="BA000022">
    <property type="protein sequence ID" value="BAA17338.1"/>
    <property type="molecule type" value="Genomic_DNA"/>
</dbReference>
<dbReference type="PIR" id="S77491">
    <property type="entry name" value="S77491"/>
</dbReference>
<dbReference type="SMR" id="P73309"/>
<dbReference type="FunCoup" id="P73309">
    <property type="interactions" value="460"/>
</dbReference>
<dbReference type="STRING" id="1148.gene:10498201"/>
<dbReference type="PaxDb" id="1148-1652416"/>
<dbReference type="EnsemblBacteria" id="BAA17338">
    <property type="protein sequence ID" value="BAA17338"/>
    <property type="gene ID" value="BAA17338"/>
</dbReference>
<dbReference type="KEGG" id="syn:sll1807"/>
<dbReference type="eggNOG" id="COG0198">
    <property type="taxonomic scope" value="Bacteria"/>
</dbReference>
<dbReference type="InParanoid" id="P73309"/>
<dbReference type="PhylomeDB" id="P73309"/>
<dbReference type="Proteomes" id="UP000001425">
    <property type="component" value="Chromosome"/>
</dbReference>
<dbReference type="GO" id="GO:1990904">
    <property type="term" value="C:ribonucleoprotein complex"/>
    <property type="evidence" value="ECO:0007669"/>
    <property type="project" value="UniProtKB-KW"/>
</dbReference>
<dbReference type="GO" id="GO:0005840">
    <property type="term" value="C:ribosome"/>
    <property type="evidence" value="ECO:0007669"/>
    <property type="project" value="UniProtKB-KW"/>
</dbReference>
<dbReference type="GO" id="GO:0019843">
    <property type="term" value="F:rRNA binding"/>
    <property type="evidence" value="ECO:0007669"/>
    <property type="project" value="UniProtKB-UniRule"/>
</dbReference>
<dbReference type="GO" id="GO:0003735">
    <property type="term" value="F:structural constituent of ribosome"/>
    <property type="evidence" value="ECO:0007669"/>
    <property type="project" value="InterPro"/>
</dbReference>
<dbReference type="GO" id="GO:0006412">
    <property type="term" value="P:translation"/>
    <property type="evidence" value="ECO:0000318"/>
    <property type="project" value="GO_Central"/>
</dbReference>
<dbReference type="CDD" id="cd06089">
    <property type="entry name" value="KOW_RPL26"/>
    <property type="match status" value="1"/>
</dbReference>
<dbReference type="FunFam" id="2.30.30.30:FF:000004">
    <property type="entry name" value="50S ribosomal protein L24"/>
    <property type="match status" value="1"/>
</dbReference>
<dbReference type="Gene3D" id="2.30.30.30">
    <property type="match status" value="1"/>
</dbReference>
<dbReference type="HAMAP" id="MF_01326_B">
    <property type="entry name" value="Ribosomal_uL24_B"/>
    <property type="match status" value="1"/>
</dbReference>
<dbReference type="InterPro" id="IPR005824">
    <property type="entry name" value="KOW"/>
</dbReference>
<dbReference type="InterPro" id="IPR014722">
    <property type="entry name" value="Rib_uL2_dom2"/>
</dbReference>
<dbReference type="InterPro" id="IPR003256">
    <property type="entry name" value="Ribosomal_uL24"/>
</dbReference>
<dbReference type="InterPro" id="IPR005825">
    <property type="entry name" value="Ribosomal_uL24_CS"/>
</dbReference>
<dbReference type="InterPro" id="IPR041988">
    <property type="entry name" value="Ribosomal_uL24_KOW"/>
</dbReference>
<dbReference type="InterPro" id="IPR008991">
    <property type="entry name" value="Translation_prot_SH3-like_sf"/>
</dbReference>
<dbReference type="NCBIfam" id="TIGR01079">
    <property type="entry name" value="rplX_bact"/>
    <property type="match status" value="1"/>
</dbReference>
<dbReference type="PANTHER" id="PTHR12903">
    <property type="entry name" value="MITOCHONDRIAL RIBOSOMAL PROTEIN L24"/>
    <property type="match status" value="1"/>
</dbReference>
<dbReference type="Pfam" id="PF00467">
    <property type="entry name" value="KOW"/>
    <property type="match status" value="1"/>
</dbReference>
<dbReference type="Pfam" id="PF17136">
    <property type="entry name" value="ribosomal_L24"/>
    <property type="match status" value="1"/>
</dbReference>
<dbReference type="SMART" id="SM00739">
    <property type="entry name" value="KOW"/>
    <property type="match status" value="1"/>
</dbReference>
<dbReference type="SUPFAM" id="SSF50104">
    <property type="entry name" value="Translation proteins SH3-like domain"/>
    <property type="match status" value="1"/>
</dbReference>
<dbReference type="PROSITE" id="PS01108">
    <property type="entry name" value="RIBOSOMAL_L24"/>
    <property type="match status" value="1"/>
</dbReference>
<protein>
    <recommendedName>
        <fullName evidence="1">Large ribosomal subunit protein uL24</fullName>
    </recommendedName>
    <alternativeName>
        <fullName evidence="2">50S ribosomal protein L24</fullName>
    </alternativeName>
</protein>
<reference key="1">
    <citation type="journal article" date="1996" name="DNA Res.">
        <title>Sequence analysis of the genome of the unicellular cyanobacterium Synechocystis sp. strain PCC6803. II. Sequence determination of the entire genome and assignment of potential protein-coding regions.</title>
        <authorList>
            <person name="Kaneko T."/>
            <person name="Sato S."/>
            <person name="Kotani H."/>
            <person name="Tanaka A."/>
            <person name="Asamizu E."/>
            <person name="Nakamura Y."/>
            <person name="Miyajima N."/>
            <person name="Hirosawa M."/>
            <person name="Sugiura M."/>
            <person name="Sasamoto S."/>
            <person name="Kimura T."/>
            <person name="Hosouchi T."/>
            <person name="Matsuno A."/>
            <person name="Muraki A."/>
            <person name="Nakazaki N."/>
            <person name="Naruo K."/>
            <person name="Okumura S."/>
            <person name="Shimpo S."/>
            <person name="Takeuchi C."/>
            <person name="Wada T."/>
            <person name="Watanabe A."/>
            <person name="Yamada M."/>
            <person name="Yasuda M."/>
            <person name="Tabata S."/>
        </authorList>
    </citation>
    <scope>NUCLEOTIDE SEQUENCE [LARGE SCALE GENOMIC DNA]</scope>
    <source>
        <strain>ATCC 27184 / PCC 6803 / Kazusa</strain>
    </source>
</reference>
<evidence type="ECO:0000255" key="1">
    <source>
        <dbReference type="HAMAP-Rule" id="MF_01326"/>
    </source>
</evidence>
<evidence type="ECO:0000305" key="2"/>
<comment type="function">
    <text evidence="1">One of two assembly initiator proteins, it binds directly to the 5'-end of the 23S rRNA, where it nucleates assembly of the 50S subunit.</text>
</comment>
<comment type="function">
    <text evidence="1">One of the proteins that surrounds the polypeptide exit tunnel on the outside of the subunit.</text>
</comment>
<comment type="subunit">
    <text evidence="1">Part of the 50S ribosomal subunit.</text>
</comment>
<comment type="similarity">
    <text evidence="1">Belongs to the universal ribosomal protein uL24 family.</text>
</comment>
<keyword id="KW-1185">Reference proteome</keyword>
<keyword id="KW-0687">Ribonucleoprotein</keyword>
<keyword id="KW-0689">Ribosomal protein</keyword>
<keyword id="KW-0694">RNA-binding</keyword>
<keyword id="KW-0699">rRNA-binding</keyword>
<name>RL24_SYNY3</name>
<accession>P73309</accession>
<organism>
    <name type="scientific">Synechocystis sp. (strain ATCC 27184 / PCC 6803 / Kazusa)</name>
    <dbReference type="NCBI Taxonomy" id="1111708"/>
    <lineage>
        <taxon>Bacteria</taxon>
        <taxon>Bacillati</taxon>
        <taxon>Cyanobacteriota</taxon>
        <taxon>Cyanophyceae</taxon>
        <taxon>Synechococcales</taxon>
        <taxon>Merismopediaceae</taxon>
        <taxon>Synechocystis</taxon>
    </lineage>
</organism>
<gene>
    <name evidence="1" type="primary">rplX</name>
    <name evidence="1" type="synonym">rpl24</name>
    <name type="ordered locus">sll1807</name>
</gene>
<feature type="chain" id="PRO_0000130738" description="Large ribosomal subunit protein uL24">
    <location>
        <begin position="1"/>
        <end position="115"/>
    </location>
</feature>
<sequence length="115" mass="12823">MTKTKPAPHRVKMHVKKGDTIQVISGKDKGKVGEVLRTIPSHSQVVVKGVNIRTKHVKPRQEGESGQISSYEAPIHSSKVMLYSTKEKIASRICYTVTDDGRKVRMLKKTGEIID</sequence>
<proteinExistence type="inferred from homology"/>